<gene>
    <name type="primary">splC</name>
    <name type="ordered locus">SAB1671c</name>
</gene>
<sequence>MNKNIVIKSMAALAILTSVTGINAAVVDETQQIANAEKNVTQVKDTNVFPYNGVVSFKDATGFAIEKNTIITNKHVSKDYKVGDRITAHPNGDKGNGGIYKIKNISDYPGNEDISVMNVEENAVERGANGYNFNENVQAFNFAKDAKVDDKIKVIGYPLPAQNTFKQFESTGTVKSIKDNNLNFDAYIEPGNSGSPVLNLNNEVVGVVYGGIGKIGSEYNGAVYFTPQIKEFIQKHIEQ</sequence>
<comment type="subcellular location">
    <subcellularLocation>
        <location evidence="1">Secreted</location>
    </subcellularLocation>
</comment>
<comment type="similarity">
    <text evidence="2">Belongs to the peptidase S1B family.</text>
</comment>
<reference key="1">
    <citation type="journal article" date="2007" name="PLoS ONE">
        <title>Molecular correlates of host specialization in Staphylococcus aureus.</title>
        <authorList>
            <person name="Herron-Olson L."/>
            <person name="Fitzgerald J.R."/>
            <person name="Musser J.M."/>
            <person name="Kapur V."/>
        </authorList>
    </citation>
    <scope>NUCLEOTIDE SEQUENCE [LARGE SCALE GENOMIC DNA]</scope>
    <source>
        <strain>bovine RF122 / ET3-1</strain>
    </source>
</reference>
<protein>
    <recommendedName>
        <fullName>Serine protease SplC</fullName>
        <ecNumber>3.4.21.-</ecNumber>
    </recommendedName>
</protein>
<organism>
    <name type="scientific">Staphylococcus aureus (strain bovine RF122 / ET3-1)</name>
    <dbReference type="NCBI Taxonomy" id="273036"/>
    <lineage>
        <taxon>Bacteria</taxon>
        <taxon>Bacillati</taxon>
        <taxon>Bacillota</taxon>
        <taxon>Bacilli</taxon>
        <taxon>Bacillales</taxon>
        <taxon>Staphylococcaceae</taxon>
        <taxon>Staphylococcus</taxon>
    </lineage>
</organism>
<dbReference type="EC" id="3.4.21.-"/>
<dbReference type="EMBL" id="AJ938182">
    <property type="protein sequence ID" value="CAI81360.1"/>
    <property type="molecule type" value="Genomic_DNA"/>
</dbReference>
<dbReference type="RefSeq" id="WP_001038860.1">
    <property type="nucleotide sequence ID" value="NC_007622.1"/>
</dbReference>
<dbReference type="SMR" id="Q2YTM4"/>
<dbReference type="MEROPS" id="S01.283"/>
<dbReference type="KEGG" id="sab:SAB1671c"/>
<dbReference type="HOGENOM" id="CLU_073589_2_0_9"/>
<dbReference type="GO" id="GO:0005576">
    <property type="term" value="C:extracellular region"/>
    <property type="evidence" value="ECO:0007669"/>
    <property type="project" value="UniProtKB-SubCell"/>
</dbReference>
<dbReference type="GO" id="GO:0004252">
    <property type="term" value="F:serine-type endopeptidase activity"/>
    <property type="evidence" value="ECO:0007669"/>
    <property type="project" value="InterPro"/>
</dbReference>
<dbReference type="GO" id="GO:0006508">
    <property type="term" value="P:proteolysis"/>
    <property type="evidence" value="ECO:0007669"/>
    <property type="project" value="UniProtKB-KW"/>
</dbReference>
<dbReference type="Gene3D" id="2.40.10.10">
    <property type="entry name" value="Trypsin-like serine proteases"/>
    <property type="match status" value="2"/>
</dbReference>
<dbReference type="InterPro" id="IPR009003">
    <property type="entry name" value="Peptidase_S1_PA"/>
</dbReference>
<dbReference type="InterPro" id="IPR043504">
    <property type="entry name" value="Peptidase_S1_PA_chymotrypsin"/>
</dbReference>
<dbReference type="InterPro" id="IPR008256">
    <property type="entry name" value="Peptidase_S1B"/>
</dbReference>
<dbReference type="InterPro" id="IPR008353">
    <property type="entry name" value="Peptidase_S1B_tx"/>
</dbReference>
<dbReference type="InterPro" id="IPR001254">
    <property type="entry name" value="Trypsin_dom"/>
</dbReference>
<dbReference type="PANTHER" id="PTHR43019:SF23">
    <property type="entry name" value="PROTEASE DO-LIKE 5, CHLOROPLASTIC"/>
    <property type="match status" value="1"/>
</dbReference>
<dbReference type="PANTHER" id="PTHR43019">
    <property type="entry name" value="SERINE ENDOPROTEASE DEGS"/>
    <property type="match status" value="1"/>
</dbReference>
<dbReference type="Pfam" id="PF00089">
    <property type="entry name" value="Trypsin"/>
    <property type="match status" value="1"/>
</dbReference>
<dbReference type="PRINTS" id="PR01774">
    <property type="entry name" value="EXFOLTOXIN"/>
</dbReference>
<dbReference type="PRINTS" id="PR00839">
    <property type="entry name" value="V8PROTEASE"/>
</dbReference>
<dbReference type="SUPFAM" id="SSF50494">
    <property type="entry name" value="Trypsin-like serine proteases"/>
    <property type="match status" value="1"/>
</dbReference>
<evidence type="ECO:0000250" key="1"/>
<evidence type="ECO:0000305" key="2"/>
<keyword id="KW-0378">Hydrolase</keyword>
<keyword id="KW-0645">Protease</keyword>
<keyword id="KW-0964">Secreted</keyword>
<keyword id="KW-0720">Serine protease</keyword>
<keyword id="KW-0732">Signal</keyword>
<proteinExistence type="inferred from homology"/>
<name>SPLC_STAAB</name>
<accession>Q2YTM4</accession>
<feature type="signal peptide" evidence="1">
    <location>
        <begin position="1"/>
        <end position="36"/>
    </location>
</feature>
<feature type="chain" id="PRO_0000359552" description="Serine protease SplC">
    <location>
        <begin position="37"/>
        <end position="239"/>
    </location>
</feature>
<feature type="active site" description="Charge relay system" evidence="1">
    <location>
        <position position="75"/>
    </location>
</feature>
<feature type="active site" description="Charge relay system" evidence="1">
    <location>
        <position position="113"/>
    </location>
</feature>
<feature type="active site" description="Charge relay system" evidence="1">
    <location>
        <position position="193"/>
    </location>
</feature>